<gene>
    <name type="primary">SHMT1</name>
</gene>
<keyword id="KW-0963">Cytoplasm</keyword>
<keyword id="KW-0554">One-carbon metabolism</keyword>
<keyword id="KW-0663">Pyridoxal phosphate</keyword>
<keyword id="KW-1185">Reference proteome</keyword>
<keyword id="KW-0808">Transferase</keyword>
<dbReference type="EC" id="2.1.2.1" evidence="2"/>
<dbReference type="EMBL" id="CR857151">
    <property type="protein sequence ID" value="CAH89452.1"/>
    <property type="molecule type" value="mRNA"/>
</dbReference>
<dbReference type="RefSeq" id="NP_001124622.1">
    <property type="nucleotide sequence ID" value="NM_001131150.1"/>
</dbReference>
<dbReference type="SMR" id="Q5RFK5"/>
<dbReference type="FunCoup" id="Q5RFK5">
    <property type="interactions" value="2007"/>
</dbReference>
<dbReference type="STRING" id="9601.ENSPPYP00000009057"/>
<dbReference type="GeneID" id="100171460"/>
<dbReference type="KEGG" id="pon:100171460"/>
<dbReference type="CTD" id="6470"/>
<dbReference type="eggNOG" id="KOG2467">
    <property type="taxonomic scope" value="Eukaryota"/>
</dbReference>
<dbReference type="InParanoid" id="Q5RFK5"/>
<dbReference type="OrthoDB" id="10265628at2759"/>
<dbReference type="UniPathway" id="UPA00193"/>
<dbReference type="Proteomes" id="UP000001595">
    <property type="component" value="Unplaced"/>
</dbReference>
<dbReference type="GO" id="GO:0005829">
    <property type="term" value="C:cytosol"/>
    <property type="evidence" value="ECO:0000250"/>
    <property type="project" value="UniProtKB"/>
</dbReference>
<dbReference type="GO" id="GO:0005739">
    <property type="term" value="C:mitochondrion"/>
    <property type="evidence" value="ECO:0007669"/>
    <property type="project" value="TreeGrafter"/>
</dbReference>
<dbReference type="GO" id="GO:0005634">
    <property type="term" value="C:nucleus"/>
    <property type="evidence" value="ECO:0007669"/>
    <property type="project" value="TreeGrafter"/>
</dbReference>
<dbReference type="GO" id="GO:0004372">
    <property type="term" value="F:glycine hydroxymethyltransferase activity"/>
    <property type="evidence" value="ECO:0000250"/>
    <property type="project" value="UniProtKB"/>
</dbReference>
<dbReference type="GO" id="GO:0030170">
    <property type="term" value="F:pyridoxal phosphate binding"/>
    <property type="evidence" value="ECO:0000250"/>
    <property type="project" value="UniProtKB"/>
</dbReference>
<dbReference type="GO" id="GO:0019264">
    <property type="term" value="P:glycine biosynthetic process from serine"/>
    <property type="evidence" value="ECO:0007669"/>
    <property type="project" value="InterPro"/>
</dbReference>
<dbReference type="GO" id="GO:0006544">
    <property type="term" value="P:glycine metabolic process"/>
    <property type="evidence" value="ECO:0000250"/>
    <property type="project" value="UniProtKB"/>
</dbReference>
<dbReference type="GO" id="GO:0006563">
    <property type="term" value="P:L-serine metabolic process"/>
    <property type="evidence" value="ECO:0000250"/>
    <property type="project" value="UniProtKB"/>
</dbReference>
<dbReference type="GO" id="GO:0051289">
    <property type="term" value="P:protein homotetramerization"/>
    <property type="evidence" value="ECO:0000250"/>
    <property type="project" value="UniProtKB"/>
</dbReference>
<dbReference type="GO" id="GO:0035999">
    <property type="term" value="P:tetrahydrofolate interconversion"/>
    <property type="evidence" value="ECO:0007669"/>
    <property type="project" value="UniProtKB-UniPathway"/>
</dbReference>
<dbReference type="GO" id="GO:0046653">
    <property type="term" value="P:tetrahydrofolate metabolic process"/>
    <property type="evidence" value="ECO:0000250"/>
    <property type="project" value="UniProtKB"/>
</dbReference>
<dbReference type="CDD" id="cd00378">
    <property type="entry name" value="SHMT"/>
    <property type="match status" value="1"/>
</dbReference>
<dbReference type="FunFam" id="3.40.640.10:FF:000097">
    <property type="entry name" value="Serine hydroxymethyltransferase"/>
    <property type="match status" value="1"/>
</dbReference>
<dbReference type="FunFam" id="3.90.1150.10:FF:000005">
    <property type="entry name" value="Serine hydroxymethyltransferase"/>
    <property type="match status" value="1"/>
</dbReference>
<dbReference type="Gene3D" id="3.90.1150.10">
    <property type="entry name" value="Aspartate Aminotransferase, domain 1"/>
    <property type="match status" value="1"/>
</dbReference>
<dbReference type="Gene3D" id="3.40.640.10">
    <property type="entry name" value="Type I PLP-dependent aspartate aminotransferase-like (Major domain)"/>
    <property type="match status" value="1"/>
</dbReference>
<dbReference type="HAMAP" id="MF_00051">
    <property type="entry name" value="SHMT"/>
    <property type="match status" value="1"/>
</dbReference>
<dbReference type="InterPro" id="IPR015424">
    <property type="entry name" value="PyrdxlP-dep_Trfase"/>
</dbReference>
<dbReference type="InterPro" id="IPR015421">
    <property type="entry name" value="PyrdxlP-dep_Trfase_major"/>
</dbReference>
<dbReference type="InterPro" id="IPR015422">
    <property type="entry name" value="PyrdxlP-dep_Trfase_small"/>
</dbReference>
<dbReference type="InterPro" id="IPR001085">
    <property type="entry name" value="Ser_HO-MeTrfase"/>
</dbReference>
<dbReference type="InterPro" id="IPR049943">
    <property type="entry name" value="Ser_HO-MeTrfase-like"/>
</dbReference>
<dbReference type="InterPro" id="IPR019798">
    <property type="entry name" value="Ser_HO-MeTrfase_PLP_BS"/>
</dbReference>
<dbReference type="InterPro" id="IPR039429">
    <property type="entry name" value="SHMT-like_dom"/>
</dbReference>
<dbReference type="NCBIfam" id="NF000586">
    <property type="entry name" value="PRK00011.1"/>
    <property type="match status" value="1"/>
</dbReference>
<dbReference type="PANTHER" id="PTHR11680">
    <property type="entry name" value="SERINE HYDROXYMETHYLTRANSFERASE"/>
    <property type="match status" value="1"/>
</dbReference>
<dbReference type="PANTHER" id="PTHR11680:SF59">
    <property type="entry name" value="SERINE HYDROXYMETHYLTRANSFERASE, CYTOSOLIC"/>
    <property type="match status" value="1"/>
</dbReference>
<dbReference type="Pfam" id="PF00464">
    <property type="entry name" value="SHMT"/>
    <property type="match status" value="1"/>
</dbReference>
<dbReference type="PIRSF" id="PIRSF000412">
    <property type="entry name" value="SHMT"/>
    <property type="match status" value="1"/>
</dbReference>
<dbReference type="SUPFAM" id="SSF53383">
    <property type="entry name" value="PLP-dependent transferases"/>
    <property type="match status" value="1"/>
</dbReference>
<dbReference type="PROSITE" id="PS00096">
    <property type="entry name" value="SHMT"/>
    <property type="match status" value="1"/>
</dbReference>
<organism>
    <name type="scientific">Pongo abelii</name>
    <name type="common">Sumatran orangutan</name>
    <name type="synonym">Pongo pygmaeus abelii</name>
    <dbReference type="NCBI Taxonomy" id="9601"/>
    <lineage>
        <taxon>Eukaryota</taxon>
        <taxon>Metazoa</taxon>
        <taxon>Chordata</taxon>
        <taxon>Craniata</taxon>
        <taxon>Vertebrata</taxon>
        <taxon>Euteleostomi</taxon>
        <taxon>Mammalia</taxon>
        <taxon>Eutheria</taxon>
        <taxon>Euarchontoglires</taxon>
        <taxon>Primates</taxon>
        <taxon>Haplorrhini</taxon>
        <taxon>Catarrhini</taxon>
        <taxon>Hominidae</taxon>
        <taxon>Pongo</taxon>
    </lineage>
</organism>
<proteinExistence type="evidence at transcript level"/>
<accession>Q5RFK5</accession>
<reference key="1">
    <citation type="submission" date="2004-11" db="EMBL/GenBank/DDBJ databases">
        <authorList>
            <consortium name="The German cDNA consortium"/>
        </authorList>
    </citation>
    <scope>NUCLEOTIDE SEQUENCE [LARGE SCALE MRNA]</scope>
    <source>
        <tissue>Kidney</tissue>
    </source>
</reference>
<sequence>MTMPVNGAHKDADLWSSHDKMLAQPLKDSDVEVYNIIKKESNRQRVGLELFASENFASQAVLEALGSCLNNKYSEGYPGQRYYGGTEFIDELETLCQKRALQAYKLDPQCWGVNVQPYSGSPANFAVYTALVEPHGRIMGLDLPDGGHLTHGFMTGKKKISATSIFFESMPYKVNPDTGYINYDQLEENARLFHPKLIIAGTSCYSRNLDYARLRKIADENGAYLMADMAHISGLVAAGVVPSPFEHCHVVTTTTHKTLRGCRAGMIFYRKGVQSVDPKTGKEILYNLESLINSAVFPGLQGGPHNHAIAGVAVALKQAMTLEFKVYQHQVVANCRALSEALTELGYKIVTGGSDNHLILVDLRSKGTDGGRAEKVLEACSIACNKNTCPGDRSALRPSGLRLGTPALTSRGLLEKDFQKVAHFIHRGIELTLQIQSDTGVRATLKEFKERLAGDKYQGAVQALREKVESFASLFPLPGLPDF</sequence>
<name>GLYC_PONAB</name>
<comment type="function">
    <text evidence="2">Interconversion of serine and glycine.</text>
</comment>
<comment type="catalytic activity">
    <reaction evidence="2">
        <text>(6R)-5,10-methylene-5,6,7,8-tetrahydrofolate + glycine + H2O = (6S)-5,6,7,8-tetrahydrofolate + L-serine</text>
        <dbReference type="Rhea" id="RHEA:15481"/>
        <dbReference type="ChEBI" id="CHEBI:15377"/>
        <dbReference type="ChEBI" id="CHEBI:15636"/>
        <dbReference type="ChEBI" id="CHEBI:33384"/>
        <dbReference type="ChEBI" id="CHEBI:57305"/>
        <dbReference type="ChEBI" id="CHEBI:57453"/>
        <dbReference type="EC" id="2.1.2.1"/>
    </reaction>
</comment>
<comment type="cofactor">
    <cofactor evidence="2">
        <name>pyridoxal 5'-phosphate</name>
        <dbReference type="ChEBI" id="CHEBI:597326"/>
    </cofactor>
</comment>
<comment type="pathway">
    <text evidence="2">One-carbon metabolism; tetrahydrofolate interconversion.</text>
</comment>
<comment type="subunit">
    <text evidence="2">Homotetramer. Identified in complex with ABRAXAS2 and the other subunits of the BRISC complex, at least composed of ABRAXAS2, BRCC3/BRCC36, BABAM2 and BABAM1/NBA1.</text>
</comment>
<comment type="subcellular location">
    <subcellularLocation>
        <location evidence="1">Cytoplasm</location>
    </subcellularLocation>
</comment>
<comment type="miscellaneous">
    <text>In eukaryotes there are two forms of the enzymes: a cytosolic one and a mitochondrial one.</text>
</comment>
<comment type="similarity">
    <text evidence="3">Belongs to the SHMT family.</text>
</comment>
<feature type="chain" id="PRO_0000291856" description="Serine hydroxymethyltransferase, cytosolic">
    <location>
        <begin position="1"/>
        <end position="483"/>
    </location>
</feature>
<feature type="modified residue" description="N6-(pyridoxal phosphate)lysine" evidence="2">
    <location>
        <position position="257"/>
    </location>
</feature>
<protein>
    <recommendedName>
        <fullName>Serine hydroxymethyltransferase, cytosolic</fullName>
        <shortName>SHMT</shortName>
        <ecNumber evidence="2">2.1.2.1</ecNumber>
    </recommendedName>
    <alternativeName>
        <fullName>Glycine hydroxymethyltransferase</fullName>
    </alternativeName>
    <alternativeName>
        <fullName>Serine methylase</fullName>
    </alternativeName>
</protein>
<evidence type="ECO:0000250" key="1"/>
<evidence type="ECO:0000250" key="2">
    <source>
        <dbReference type="UniProtKB" id="P34896"/>
    </source>
</evidence>
<evidence type="ECO:0000305" key="3"/>